<comment type="function">
    <text evidence="1">Essential for the replication of viral ssDNA. The closed circular ssDNA genome is first converted to a superhelical dsDNA. Rep binds a specific region at the genome origin of replication. It introduces an endonucleolytic nick within the conserved sequence 5'-TAATATTAC-3' in the intergenic region of the genome present in all geminiviruses, thereby initiating the rolling circle replication (RCR). Following cleavage, binds covalently to the 5'-phosphate of DNA as a tyrosyl ester. The cleavage gives rise to a free 3'-OH that serves as a primer for the cellular DNA polymerase. The polymerase synthesizes the (+) strand DNA by rolling circle mechanism. After one round of replication, a Rep-catalyzed nucleotidyl transfer reaction releases a circular single-stranded virus genome, thereby terminating the replication. Displays origin-specific DNA cleavage, nucleotidyl transferase, ATPase and helicase activities (By similarity).</text>
</comment>
<comment type="cofactor">
    <cofactor evidence="3">
        <name>Mg(2+)</name>
        <dbReference type="ChEBI" id="CHEBI:18420"/>
    </cofactor>
    <cofactor evidence="3">
        <name>Mn(2+)</name>
        <dbReference type="ChEBI" id="CHEBI:29035"/>
    </cofactor>
    <text evidence="3">Divalent metal cations, possibly Mg(2+) or Mn(2+).</text>
</comment>
<comment type="subunit">
    <text evidence="1">Homooligomer. Interacts with the replication enhancer protein (REn). Interacts with host retinoblastoma-related protein 1 (RBR1), and may thereby induce the transcription of host replicative enzymes even if the cell is not dividing anymore. Interacts with host PCNA. Interacts with host SCE1 protein (By similarity).</text>
</comment>
<comment type="subcellular location">
    <subcellularLocation>
        <location evidence="1">Host nucleus</location>
    </subcellularLocation>
</comment>
<comment type="domain">
    <text evidence="1">There are 3 rolling circle replication (RCR) motifs. RCR-2 is probably involved in metal coordination. RCR-3 is required for phosphodiester bond cleavage for initiation of RCR (By similarity).</text>
</comment>
<comment type="similarity">
    <text evidence="4">Belongs to the geminiviridae Rep protein family.</text>
</comment>
<keyword id="KW-0067">ATP-binding</keyword>
<keyword id="KW-0190">Covalent protein-DNA linkage</keyword>
<keyword id="KW-0235">DNA replication</keyword>
<keyword id="KW-0238">DNA-binding</keyword>
<keyword id="KW-0255">Endonuclease</keyword>
<keyword id="KW-0347">Helicase</keyword>
<keyword id="KW-1048">Host nucleus</keyword>
<keyword id="KW-0945">Host-virus interaction</keyword>
<keyword id="KW-0378">Hydrolase</keyword>
<keyword id="KW-0479">Metal-binding</keyword>
<keyword id="KW-0511">Multifunctional enzyme</keyword>
<keyword id="KW-0540">Nuclease</keyword>
<keyword id="KW-0547">Nucleotide-binding</keyword>
<keyword id="KW-0548">Nucleotidyltransferase</keyword>
<keyword id="KW-1185">Reference proteome</keyword>
<keyword id="KW-0808">Transferase</keyword>
<name>REP_BGYMV</name>
<organismHost>
    <name type="scientific">Macroptilium lathyroides</name>
    <dbReference type="NCBI Taxonomy" id="260885"/>
</organismHost>
<organismHost>
    <name type="scientific">Malvastrum coromandelianum</name>
    <dbReference type="NCBI Taxonomy" id="108453"/>
</organismHost>
<organismHost>
    <name type="scientific">Phaseolus lunatus</name>
    <name type="common">Lima bean</name>
    <name type="synonym">Phaseolus limensis</name>
    <dbReference type="NCBI Taxonomy" id="3884"/>
</organismHost>
<organismHost>
    <name type="scientific">Phaseolus vulgaris</name>
    <name type="common">Kidney bean</name>
    <name type="synonym">French bean</name>
    <dbReference type="NCBI Taxonomy" id="3885"/>
</organismHost>
<proteinExistence type="inferred from homology"/>
<feature type="chain" id="PRO_0000222202" description="Replication-associated protein">
    <location>
        <begin position="1"/>
        <end position="353"/>
    </location>
</feature>
<feature type="domain" description="CRESS-DNA virus Rep endonuclease" evidence="3">
    <location>
        <begin position="8"/>
        <end position="116"/>
    </location>
</feature>
<feature type="region of interest" description="Binding to RBR1" evidence="1">
    <location>
        <begin position="143"/>
        <end position="153"/>
    </location>
</feature>
<feature type="region of interest" description="Oligomerization" evidence="1">
    <location>
        <begin position="156"/>
        <end position="176"/>
    </location>
</feature>
<feature type="short sequence motif" description="RCR-1" evidence="3">
    <location>
        <begin position="15"/>
        <end position="18"/>
    </location>
</feature>
<feature type="short sequence motif" description="RCR-2" evidence="3">
    <location>
        <begin position="57"/>
        <end position="59"/>
    </location>
</feature>
<feature type="short sequence motif" description="RCR-3" evidence="3">
    <location>
        <begin position="103"/>
        <end position="106"/>
    </location>
</feature>
<feature type="active site" description="For DNA cleavage activity" evidence="3">
    <location>
        <position position="103"/>
    </location>
</feature>
<feature type="binding site" evidence="3">
    <location>
        <position position="49"/>
    </location>
    <ligand>
        <name>a divalent metal cation</name>
        <dbReference type="ChEBI" id="CHEBI:60240"/>
    </ligand>
</feature>
<feature type="binding site" evidence="3">
    <location>
        <position position="57"/>
    </location>
    <ligand>
        <name>a divalent metal cation</name>
        <dbReference type="ChEBI" id="CHEBI:60240"/>
    </ligand>
</feature>
<feature type="binding site" evidence="3">
    <location>
        <position position="59"/>
    </location>
    <ligand>
        <name>a divalent metal cation</name>
        <dbReference type="ChEBI" id="CHEBI:60240"/>
    </ligand>
</feature>
<feature type="binding site" evidence="3">
    <location>
        <position position="107"/>
    </location>
    <ligand>
        <name>a divalent metal cation</name>
        <dbReference type="ChEBI" id="CHEBI:60240"/>
    </ligand>
</feature>
<feature type="binding site" evidence="2">
    <location>
        <begin position="222"/>
        <end position="229"/>
    </location>
    <ligand>
        <name>ATP</name>
        <dbReference type="ChEBI" id="CHEBI:30616"/>
    </ligand>
</feature>
<organism>
    <name type="scientific">Bean golden yellow mosaic virus (isolate Puerto Rico)</name>
    <name type="common">BGYMV</name>
    <name type="synonym">Bean golden mosaic virus (isolate Puerto Rico)</name>
    <dbReference type="NCBI Taxonomy" id="222448"/>
    <lineage>
        <taxon>Viruses</taxon>
        <taxon>Monodnaviria</taxon>
        <taxon>Shotokuvirae</taxon>
        <taxon>Cressdnaviricota</taxon>
        <taxon>Repensiviricetes</taxon>
        <taxon>Geplafuvirales</taxon>
        <taxon>Geminiviridae</taxon>
        <taxon>Begomovirus</taxon>
        <taxon>Bean golden yellow mosaic virus</taxon>
    </lineage>
</organism>
<sequence length="353" mass="40190">MPPPQRFRVQSKNYFLTYPRCTIPKEEALSQLQKIHTTTNKKFIKVCEERHDNGEPHLHALIQFEGKFICTNKRLFDLVSTTRSAHFHPNIQGAKSSSDVKEYIDKDGVTIEWGQFQVDGRSARGGQQSANDSYAKALNADSIESALTILKEEQPKDYVLQNHNIRSNLERIFFKVPEPWVPPFPLSSFVNIPVVMQDWVDDYFGRGSAARPERPISIIVEGDSRTGKTMWARALGPHNYLSGHLDFNSLVYSNSVEYNVIDDITPNYLKLKDWKELIGEQKDWQSNCKYGKPVQIKGGIPSIVLCNPGEGSSYKDFLNKEEKPALHNWTIHNAIFVTLTAPLYQSTAQDCQT</sequence>
<protein>
    <recommendedName>
        <fullName>Replication-associated protein</fullName>
        <shortName>Rep</shortName>
        <ecNumber>2.7.7.-</ecNumber>
        <ecNumber>3.1.21.-</ecNumber>
    </recommendedName>
    <alternativeName>
        <fullName>40.2 kDa protein</fullName>
    </alternativeName>
    <alternativeName>
        <fullName>Protein AC1</fullName>
    </alternativeName>
    <alternativeName>
        <fullName>Protein AL1</fullName>
    </alternativeName>
</protein>
<dbReference type="EC" id="2.7.7.-"/>
<dbReference type="EC" id="3.1.21.-"/>
<dbReference type="EMBL" id="M10070">
    <property type="protein sequence ID" value="AAA46318.1"/>
    <property type="molecule type" value="Genomic_DNA"/>
</dbReference>
<dbReference type="SMR" id="P0CK39"/>
<dbReference type="Proteomes" id="UP000006572">
    <property type="component" value="Genome"/>
</dbReference>
<dbReference type="GO" id="GO:0042025">
    <property type="term" value="C:host cell nucleus"/>
    <property type="evidence" value="ECO:0007669"/>
    <property type="project" value="UniProtKB-SubCell"/>
</dbReference>
<dbReference type="GO" id="GO:0005524">
    <property type="term" value="F:ATP binding"/>
    <property type="evidence" value="ECO:0007669"/>
    <property type="project" value="UniProtKB-KW"/>
</dbReference>
<dbReference type="GO" id="GO:0003677">
    <property type="term" value="F:DNA binding"/>
    <property type="evidence" value="ECO:0007669"/>
    <property type="project" value="UniProtKB-KW"/>
</dbReference>
<dbReference type="GO" id="GO:0016888">
    <property type="term" value="F:endodeoxyribonuclease activity, producing 5'-phosphomonoesters"/>
    <property type="evidence" value="ECO:0007669"/>
    <property type="project" value="InterPro"/>
</dbReference>
<dbReference type="GO" id="GO:0004386">
    <property type="term" value="F:helicase activity"/>
    <property type="evidence" value="ECO:0007669"/>
    <property type="project" value="UniProtKB-KW"/>
</dbReference>
<dbReference type="GO" id="GO:0046872">
    <property type="term" value="F:metal ion binding"/>
    <property type="evidence" value="ECO:0007669"/>
    <property type="project" value="UniProtKB-KW"/>
</dbReference>
<dbReference type="GO" id="GO:0016779">
    <property type="term" value="F:nucleotidyltransferase activity"/>
    <property type="evidence" value="ECO:0007669"/>
    <property type="project" value="UniProtKB-KW"/>
</dbReference>
<dbReference type="GO" id="GO:0005198">
    <property type="term" value="F:structural molecule activity"/>
    <property type="evidence" value="ECO:0007669"/>
    <property type="project" value="InterPro"/>
</dbReference>
<dbReference type="GO" id="GO:0006260">
    <property type="term" value="P:DNA replication"/>
    <property type="evidence" value="ECO:0007669"/>
    <property type="project" value="UniProtKB-KW"/>
</dbReference>
<dbReference type="FunFam" id="3.40.1310.20:FF:000001">
    <property type="entry name" value="Replication-associated protein"/>
    <property type="match status" value="1"/>
</dbReference>
<dbReference type="Gene3D" id="3.40.1310.20">
    <property type="match status" value="1"/>
</dbReference>
<dbReference type="InterPro" id="IPR049912">
    <property type="entry name" value="CRESS_DNA_REP"/>
</dbReference>
<dbReference type="InterPro" id="IPR001301">
    <property type="entry name" value="Gemini_AL1_CLV"/>
</dbReference>
<dbReference type="InterPro" id="IPR001191">
    <property type="entry name" value="Gemini_AL1_REP"/>
</dbReference>
<dbReference type="InterPro" id="IPR022692">
    <property type="entry name" value="Gemini_AL1_REP_central"/>
</dbReference>
<dbReference type="Pfam" id="PF00799">
    <property type="entry name" value="Gemini_AL1"/>
    <property type="match status" value="1"/>
</dbReference>
<dbReference type="Pfam" id="PF08283">
    <property type="entry name" value="Gemini_AL1_M"/>
    <property type="match status" value="1"/>
</dbReference>
<dbReference type="PRINTS" id="PR00227">
    <property type="entry name" value="GEMCOATAL1"/>
</dbReference>
<dbReference type="PRINTS" id="PR00228">
    <property type="entry name" value="GEMCOATCLVL1"/>
</dbReference>
<dbReference type="SUPFAM" id="SSF55464">
    <property type="entry name" value="Origin of replication-binding domain, RBD-like"/>
    <property type="match status" value="1"/>
</dbReference>
<dbReference type="PROSITE" id="PS52020">
    <property type="entry name" value="CRESS_DNA_REP"/>
    <property type="match status" value="1"/>
</dbReference>
<reference key="1">
    <citation type="journal article" date="1985" name="Proc. Natl. Acad. Sci. U.S.A.">
        <title>Nucleotide sequence of bean golden mosaic virus and a model for gene regulation in geminiviruses.</title>
        <authorList>
            <person name="Howarth A.J."/>
            <person name="Caton J."/>
            <person name="Bossert M."/>
            <person name="Goodman R.M."/>
        </authorList>
    </citation>
    <scope>NUCLEOTIDE SEQUENCE [GENOMIC DNA]</scope>
</reference>
<accession>P0CK39</accession>
<accession>P05175</accession>
<accession>P87726</accession>
<gene>
    <name type="ORF">AC1</name>
    <name type="ORF">AL1</name>
</gene>
<evidence type="ECO:0000250" key="1"/>
<evidence type="ECO:0000255" key="2"/>
<evidence type="ECO:0000255" key="3">
    <source>
        <dbReference type="PROSITE-ProRule" id="PRU01364"/>
    </source>
</evidence>
<evidence type="ECO:0000305" key="4"/>